<keyword id="KW-0067">ATP-binding</keyword>
<keyword id="KW-0436">Ligase</keyword>
<keyword id="KW-0479">Metal-binding</keyword>
<keyword id="KW-0547">Nucleotide-binding</keyword>
<keyword id="KW-0671">Queuosine biosynthesis</keyword>
<keyword id="KW-1185">Reference proteome</keyword>
<keyword id="KW-0862">Zinc</keyword>
<gene>
    <name evidence="1" type="primary">queC1</name>
    <name type="ordered locus">DSY0668</name>
</gene>
<protein>
    <recommendedName>
        <fullName evidence="1">7-cyano-7-deazaguanine synthase 1</fullName>
        <ecNumber evidence="1">6.3.4.20</ecNumber>
    </recommendedName>
    <alternativeName>
        <fullName evidence="1">7-cyano-7-carbaguanine synthase 1</fullName>
    </alternativeName>
    <alternativeName>
        <fullName evidence="1">PreQ(0) synthase 1</fullName>
    </alternativeName>
    <alternativeName>
        <fullName evidence="1">Queuosine biosynthesis protein QueC 1</fullName>
    </alternativeName>
</protein>
<feature type="chain" id="PRO_0000246835" description="7-cyano-7-deazaguanine synthase 1">
    <location>
        <begin position="1"/>
        <end position="220"/>
    </location>
</feature>
<feature type="binding site" evidence="1">
    <location>
        <begin position="10"/>
        <end position="20"/>
    </location>
    <ligand>
        <name>ATP</name>
        <dbReference type="ChEBI" id="CHEBI:30616"/>
    </ligand>
</feature>
<feature type="binding site" evidence="1">
    <location>
        <position position="183"/>
    </location>
    <ligand>
        <name>Zn(2+)</name>
        <dbReference type="ChEBI" id="CHEBI:29105"/>
    </ligand>
</feature>
<feature type="binding site" evidence="1">
    <location>
        <position position="191"/>
    </location>
    <ligand>
        <name>Zn(2+)</name>
        <dbReference type="ChEBI" id="CHEBI:29105"/>
    </ligand>
</feature>
<feature type="binding site" evidence="1">
    <location>
        <position position="194"/>
    </location>
    <ligand>
        <name>Zn(2+)</name>
        <dbReference type="ChEBI" id="CHEBI:29105"/>
    </ligand>
</feature>
<feature type="binding site" evidence="1">
    <location>
        <position position="197"/>
    </location>
    <ligand>
        <name>Zn(2+)</name>
        <dbReference type="ChEBI" id="CHEBI:29105"/>
    </ligand>
</feature>
<name>QUEC1_DESHY</name>
<organism>
    <name type="scientific">Desulfitobacterium hafniense (strain Y51)</name>
    <dbReference type="NCBI Taxonomy" id="138119"/>
    <lineage>
        <taxon>Bacteria</taxon>
        <taxon>Bacillati</taxon>
        <taxon>Bacillota</taxon>
        <taxon>Clostridia</taxon>
        <taxon>Eubacteriales</taxon>
        <taxon>Desulfitobacteriaceae</taxon>
        <taxon>Desulfitobacterium</taxon>
    </lineage>
</organism>
<evidence type="ECO:0000255" key="1">
    <source>
        <dbReference type="HAMAP-Rule" id="MF_01633"/>
    </source>
</evidence>
<accession>Q24ZT5</accession>
<reference key="1">
    <citation type="journal article" date="2006" name="J. Bacteriol.">
        <title>Complete genome sequence of the dehalorespiring bacterium Desulfitobacterium hafniense Y51 and comparison with Dehalococcoides ethenogenes 195.</title>
        <authorList>
            <person name="Nonaka H."/>
            <person name="Keresztes G."/>
            <person name="Shinoda Y."/>
            <person name="Ikenaga Y."/>
            <person name="Abe M."/>
            <person name="Naito K."/>
            <person name="Inatomi K."/>
            <person name="Furukawa K."/>
            <person name="Inui M."/>
            <person name="Yukawa H."/>
        </authorList>
    </citation>
    <scope>NUCLEOTIDE SEQUENCE [LARGE SCALE GENOMIC DNA]</scope>
    <source>
        <strain>Y51</strain>
    </source>
</reference>
<sequence length="220" mass="24953">MGKNKVVLLFSGGIDSTVLLFWLLSRNYEIFPLFINYGQKSYEGELEAINKILKDLNTKNNLLTLNMPELQLVGSGALVGEYPKNISSHNEWYASEFFPNRNMILLSIAATYGYKLQISKIAIGVVGDSYQDTTRTFLEAMEMTLAQSIARYELIAPFAGHPRQKVIEEAYRLQVPLKSTFSCNAMGNRHCLLCTSCYEREKAIQLHEQCGKERAEKSDF</sequence>
<proteinExistence type="inferred from homology"/>
<dbReference type="EC" id="6.3.4.20" evidence="1"/>
<dbReference type="EMBL" id="AP008230">
    <property type="protein sequence ID" value="BAE82457.1"/>
    <property type="molecule type" value="Genomic_DNA"/>
</dbReference>
<dbReference type="RefSeq" id="WP_011459221.1">
    <property type="nucleotide sequence ID" value="NC_007907.1"/>
</dbReference>
<dbReference type="SMR" id="Q24ZT5"/>
<dbReference type="STRING" id="138119.DSY0668"/>
<dbReference type="KEGG" id="dsy:DSY0668"/>
<dbReference type="eggNOG" id="COG0603">
    <property type="taxonomic scope" value="Bacteria"/>
</dbReference>
<dbReference type="HOGENOM" id="CLU_081854_1_0_9"/>
<dbReference type="UniPathway" id="UPA00391"/>
<dbReference type="Proteomes" id="UP000001946">
    <property type="component" value="Chromosome"/>
</dbReference>
<dbReference type="GO" id="GO:0005524">
    <property type="term" value="F:ATP binding"/>
    <property type="evidence" value="ECO:0007669"/>
    <property type="project" value="UniProtKB-UniRule"/>
</dbReference>
<dbReference type="GO" id="GO:0016879">
    <property type="term" value="F:ligase activity, forming carbon-nitrogen bonds"/>
    <property type="evidence" value="ECO:0007669"/>
    <property type="project" value="UniProtKB-UniRule"/>
</dbReference>
<dbReference type="GO" id="GO:0008270">
    <property type="term" value="F:zinc ion binding"/>
    <property type="evidence" value="ECO:0007669"/>
    <property type="project" value="UniProtKB-UniRule"/>
</dbReference>
<dbReference type="GO" id="GO:0008616">
    <property type="term" value="P:queuosine biosynthetic process"/>
    <property type="evidence" value="ECO:0007669"/>
    <property type="project" value="UniProtKB-UniRule"/>
</dbReference>
<dbReference type="CDD" id="cd01995">
    <property type="entry name" value="QueC-like"/>
    <property type="match status" value="1"/>
</dbReference>
<dbReference type="Gene3D" id="3.40.50.620">
    <property type="entry name" value="HUPs"/>
    <property type="match status" value="1"/>
</dbReference>
<dbReference type="HAMAP" id="MF_01633">
    <property type="entry name" value="QueC"/>
    <property type="match status" value="1"/>
</dbReference>
<dbReference type="InterPro" id="IPR018317">
    <property type="entry name" value="QueC"/>
</dbReference>
<dbReference type="InterPro" id="IPR014729">
    <property type="entry name" value="Rossmann-like_a/b/a_fold"/>
</dbReference>
<dbReference type="PANTHER" id="PTHR42914">
    <property type="entry name" value="7-CYANO-7-DEAZAGUANINE SYNTHASE"/>
    <property type="match status" value="1"/>
</dbReference>
<dbReference type="PANTHER" id="PTHR42914:SF1">
    <property type="entry name" value="7-CYANO-7-DEAZAGUANINE SYNTHASE"/>
    <property type="match status" value="1"/>
</dbReference>
<dbReference type="Pfam" id="PF06508">
    <property type="entry name" value="QueC"/>
    <property type="match status" value="1"/>
</dbReference>
<dbReference type="PIRSF" id="PIRSF006293">
    <property type="entry name" value="ExsB"/>
    <property type="match status" value="1"/>
</dbReference>
<dbReference type="SUPFAM" id="SSF52402">
    <property type="entry name" value="Adenine nucleotide alpha hydrolases-like"/>
    <property type="match status" value="1"/>
</dbReference>
<comment type="function">
    <text evidence="1">Catalyzes the ATP-dependent conversion of 7-carboxy-7-deazaguanine (CDG) to 7-cyano-7-deazaguanine (preQ(0)).</text>
</comment>
<comment type="catalytic activity">
    <reaction evidence="1">
        <text>7-carboxy-7-deazaguanine + NH4(+) + ATP = 7-cyano-7-deazaguanine + ADP + phosphate + H2O + H(+)</text>
        <dbReference type="Rhea" id="RHEA:27982"/>
        <dbReference type="ChEBI" id="CHEBI:15377"/>
        <dbReference type="ChEBI" id="CHEBI:15378"/>
        <dbReference type="ChEBI" id="CHEBI:28938"/>
        <dbReference type="ChEBI" id="CHEBI:30616"/>
        <dbReference type="ChEBI" id="CHEBI:43474"/>
        <dbReference type="ChEBI" id="CHEBI:45075"/>
        <dbReference type="ChEBI" id="CHEBI:61036"/>
        <dbReference type="ChEBI" id="CHEBI:456216"/>
        <dbReference type="EC" id="6.3.4.20"/>
    </reaction>
</comment>
<comment type="cofactor">
    <cofactor evidence="1">
        <name>Zn(2+)</name>
        <dbReference type="ChEBI" id="CHEBI:29105"/>
    </cofactor>
    <text evidence="1">Binds 1 zinc ion per subunit.</text>
</comment>
<comment type="pathway">
    <text evidence="1">Purine metabolism; 7-cyano-7-deazaguanine biosynthesis.</text>
</comment>
<comment type="subunit">
    <text evidence="1">Homodimer.</text>
</comment>
<comment type="similarity">
    <text evidence="1">Belongs to the QueC family.</text>
</comment>